<organism>
    <name type="scientific">Bordetella parapertussis (strain 12822 / ATCC BAA-587 / NCTC 13253)</name>
    <dbReference type="NCBI Taxonomy" id="257311"/>
    <lineage>
        <taxon>Bacteria</taxon>
        <taxon>Pseudomonadati</taxon>
        <taxon>Pseudomonadota</taxon>
        <taxon>Betaproteobacteria</taxon>
        <taxon>Burkholderiales</taxon>
        <taxon>Alcaligenaceae</taxon>
        <taxon>Bordetella</taxon>
    </lineage>
</organism>
<name>ERPA_BORPA</name>
<comment type="function">
    <text evidence="1">Required for insertion of 4Fe-4S clusters.</text>
</comment>
<comment type="cofactor">
    <cofactor evidence="1">
        <name>iron-sulfur cluster</name>
        <dbReference type="ChEBI" id="CHEBI:30408"/>
    </cofactor>
    <text evidence="1">Binds 1 iron-sulfur cluster per subunit.</text>
</comment>
<comment type="subunit">
    <text evidence="1">Homodimer.</text>
</comment>
<comment type="similarity">
    <text evidence="1">Belongs to the HesB/IscA family.</text>
</comment>
<proteinExistence type="inferred from homology"/>
<gene>
    <name evidence="1" type="primary">erpA</name>
    <name type="ordered locus">BPP3880</name>
</gene>
<reference key="1">
    <citation type="journal article" date="2003" name="Nat. Genet.">
        <title>Comparative analysis of the genome sequences of Bordetella pertussis, Bordetella parapertussis and Bordetella bronchiseptica.</title>
        <authorList>
            <person name="Parkhill J."/>
            <person name="Sebaihia M."/>
            <person name="Preston A."/>
            <person name="Murphy L.D."/>
            <person name="Thomson N.R."/>
            <person name="Harris D.E."/>
            <person name="Holden M.T.G."/>
            <person name="Churcher C.M."/>
            <person name="Bentley S.D."/>
            <person name="Mungall K.L."/>
            <person name="Cerdeno-Tarraga A.-M."/>
            <person name="Temple L."/>
            <person name="James K.D."/>
            <person name="Harris B."/>
            <person name="Quail M.A."/>
            <person name="Achtman M."/>
            <person name="Atkin R."/>
            <person name="Baker S."/>
            <person name="Basham D."/>
            <person name="Bason N."/>
            <person name="Cherevach I."/>
            <person name="Chillingworth T."/>
            <person name="Collins M."/>
            <person name="Cronin A."/>
            <person name="Davis P."/>
            <person name="Doggett J."/>
            <person name="Feltwell T."/>
            <person name="Goble A."/>
            <person name="Hamlin N."/>
            <person name="Hauser H."/>
            <person name="Holroyd S."/>
            <person name="Jagels K."/>
            <person name="Leather S."/>
            <person name="Moule S."/>
            <person name="Norberczak H."/>
            <person name="O'Neil S."/>
            <person name="Ormond D."/>
            <person name="Price C."/>
            <person name="Rabbinowitsch E."/>
            <person name="Rutter S."/>
            <person name="Sanders M."/>
            <person name="Saunders D."/>
            <person name="Seeger K."/>
            <person name="Sharp S."/>
            <person name="Simmonds M."/>
            <person name="Skelton J."/>
            <person name="Squares R."/>
            <person name="Squares S."/>
            <person name="Stevens K."/>
            <person name="Unwin L."/>
            <person name="Whitehead S."/>
            <person name="Barrell B.G."/>
            <person name="Maskell D.J."/>
        </authorList>
    </citation>
    <scope>NUCLEOTIDE SEQUENCE [LARGE SCALE GENOMIC DNA]</scope>
    <source>
        <strain>12822 / ATCC BAA-587 / NCTC 13253</strain>
    </source>
</reference>
<evidence type="ECO:0000255" key="1">
    <source>
        <dbReference type="HAMAP-Rule" id="MF_01380"/>
    </source>
</evidence>
<dbReference type="EMBL" id="BX640435">
    <property type="protein sequence ID" value="CAE39163.1"/>
    <property type="molecule type" value="Genomic_DNA"/>
</dbReference>
<dbReference type="RefSeq" id="WP_003814883.1">
    <property type="nucleotide sequence ID" value="NC_002928.3"/>
</dbReference>
<dbReference type="SMR" id="Q7W3Z5"/>
<dbReference type="GeneID" id="93205680"/>
<dbReference type="KEGG" id="bpa:BPP3880"/>
<dbReference type="HOGENOM" id="CLU_069054_5_3_4"/>
<dbReference type="Proteomes" id="UP000001421">
    <property type="component" value="Chromosome"/>
</dbReference>
<dbReference type="GO" id="GO:0051537">
    <property type="term" value="F:2 iron, 2 sulfur cluster binding"/>
    <property type="evidence" value="ECO:0007669"/>
    <property type="project" value="TreeGrafter"/>
</dbReference>
<dbReference type="GO" id="GO:0051539">
    <property type="term" value="F:4 iron, 4 sulfur cluster binding"/>
    <property type="evidence" value="ECO:0007669"/>
    <property type="project" value="TreeGrafter"/>
</dbReference>
<dbReference type="GO" id="GO:0005506">
    <property type="term" value="F:iron ion binding"/>
    <property type="evidence" value="ECO:0007669"/>
    <property type="project" value="UniProtKB-UniRule"/>
</dbReference>
<dbReference type="GO" id="GO:0016226">
    <property type="term" value="P:iron-sulfur cluster assembly"/>
    <property type="evidence" value="ECO:0007669"/>
    <property type="project" value="UniProtKB-UniRule"/>
</dbReference>
<dbReference type="FunFam" id="2.60.300.12:FF:000002">
    <property type="entry name" value="Iron-sulfur cluster insertion protein ErpA"/>
    <property type="match status" value="1"/>
</dbReference>
<dbReference type="Gene3D" id="2.60.300.12">
    <property type="entry name" value="HesB-like domain"/>
    <property type="match status" value="1"/>
</dbReference>
<dbReference type="HAMAP" id="MF_01380">
    <property type="entry name" value="Fe_S_insert_ErpA"/>
    <property type="match status" value="1"/>
</dbReference>
<dbReference type="InterPro" id="IPR000361">
    <property type="entry name" value="FeS_biogenesis"/>
</dbReference>
<dbReference type="InterPro" id="IPR016092">
    <property type="entry name" value="FeS_cluster_insertion"/>
</dbReference>
<dbReference type="InterPro" id="IPR017870">
    <property type="entry name" value="FeS_cluster_insertion_CS"/>
</dbReference>
<dbReference type="InterPro" id="IPR023063">
    <property type="entry name" value="FeS_cluster_insertion_RrpA"/>
</dbReference>
<dbReference type="InterPro" id="IPR035903">
    <property type="entry name" value="HesB-like_dom_sf"/>
</dbReference>
<dbReference type="NCBIfam" id="TIGR00049">
    <property type="entry name" value="iron-sulfur cluster assembly accessory protein"/>
    <property type="match status" value="1"/>
</dbReference>
<dbReference type="NCBIfam" id="NF010147">
    <property type="entry name" value="PRK13623.1"/>
    <property type="match status" value="1"/>
</dbReference>
<dbReference type="PANTHER" id="PTHR43011">
    <property type="entry name" value="IRON-SULFUR CLUSTER ASSEMBLY 2 HOMOLOG, MITOCHONDRIAL"/>
    <property type="match status" value="1"/>
</dbReference>
<dbReference type="PANTHER" id="PTHR43011:SF1">
    <property type="entry name" value="IRON-SULFUR CLUSTER ASSEMBLY 2 HOMOLOG, MITOCHONDRIAL"/>
    <property type="match status" value="1"/>
</dbReference>
<dbReference type="Pfam" id="PF01521">
    <property type="entry name" value="Fe-S_biosyn"/>
    <property type="match status" value="1"/>
</dbReference>
<dbReference type="SUPFAM" id="SSF89360">
    <property type="entry name" value="HesB-like domain"/>
    <property type="match status" value="1"/>
</dbReference>
<dbReference type="PROSITE" id="PS01152">
    <property type="entry name" value="HESB"/>
    <property type="match status" value="1"/>
</dbReference>
<keyword id="KW-0408">Iron</keyword>
<keyword id="KW-0411">Iron-sulfur</keyword>
<keyword id="KW-0479">Metal-binding</keyword>
<protein>
    <recommendedName>
        <fullName evidence="1">Putative iron-sulfur cluster insertion protein ErpA</fullName>
    </recommendedName>
</protein>
<feature type="chain" id="PRO_0000311451" description="Putative iron-sulfur cluster insertion protein ErpA">
    <location>
        <begin position="1"/>
        <end position="123"/>
    </location>
</feature>
<feature type="binding site" evidence="1">
    <location>
        <position position="51"/>
    </location>
    <ligand>
        <name>iron-sulfur cluster</name>
        <dbReference type="ChEBI" id="CHEBI:30408"/>
    </ligand>
</feature>
<feature type="binding site" evidence="1">
    <location>
        <position position="115"/>
    </location>
    <ligand>
        <name>iron-sulfur cluster</name>
        <dbReference type="ChEBI" id="CHEBI:30408"/>
    </ligand>
</feature>
<feature type="binding site" evidence="1">
    <location>
        <position position="117"/>
    </location>
    <ligand>
        <name>iron-sulfur cluster</name>
        <dbReference type="ChEBI" id="CHEBI:30408"/>
    </ligand>
</feature>
<accession>Q7W3Z5</accession>
<sequence>MNAVTETVDLQAPPPVPLVFTDSAAAKVKDLLAEEGNPELKLRVFVQGGGCSGFQYGFTFDEVVNDDDTVLDKAGVQLLVDPMSFQYLVGAEIDYKEDLEGAQFVIRNPNASTTCGCGSSFSV</sequence>